<feature type="chain" id="PRO_0000098220" description="10.9 kDa protein">
    <location>
        <begin position="1"/>
        <end position="96"/>
    </location>
</feature>
<accession>P25134</accession>
<organismHost>
    <name type="scientific">Pseudomonas aeruginosa</name>
    <dbReference type="NCBI Taxonomy" id="287"/>
</organismHost>
<dbReference type="EMBL" id="X52107">
    <property type="protein sequence ID" value="CAA36340.1"/>
    <property type="molecule type" value="Genomic_DNA"/>
</dbReference>
<dbReference type="PIR" id="S15152">
    <property type="entry name" value="S15152"/>
</dbReference>
<dbReference type="RefSeq" id="NP_039612.1">
    <property type="nucleotide sequence ID" value="NC_001331.1"/>
</dbReference>
<dbReference type="GeneID" id="1260703"/>
<dbReference type="KEGG" id="vg:1260703"/>
<dbReference type="Proteomes" id="UP000002121">
    <property type="component" value="Genome"/>
</dbReference>
<dbReference type="InterPro" id="IPR035229">
    <property type="entry name" value="PflM"/>
</dbReference>
<dbReference type="Pfam" id="PF17525">
    <property type="entry name" value="DUF5447"/>
    <property type="match status" value="1"/>
</dbReference>
<keyword id="KW-1185">Reference proteome</keyword>
<sequence length="96" mass="10952">MAASPYYLRQTHAPDCACSVCWSVRQAIPLHNPSPCPDCRPPGLPYLEGGRWLCRPRSFCAKHDPSRRPPKYWHVVYDSGKPTPFVPVREDFQLEG</sequence>
<proteinExistence type="predicted"/>
<name>VG096_BPPF1</name>
<reference key="1">
    <citation type="journal article" date="1991" name="J. Mol. Biol.">
        <title>DNA sequence of the filamentous bacteriophage Pf1.</title>
        <authorList>
            <person name="Hill D.F."/>
            <person name="Short N.J."/>
            <person name="Perham R.N."/>
            <person name="Petersen G.B."/>
        </authorList>
    </citation>
    <scope>NUCLEOTIDE SEQUENCE [GENOMIC DNA]</scope>
    <source>
        <strain>ATCC 25102-B1 / pf</strain>
    </source>
</reference>
<organism>
    <name type="scientific">Pseudomonas phage Pf1</name>
    <name type="common">Bacteriophage Pf1</name>
    <dbReference type="NCBI Taxonomy" id="2011081"/>
    <lineage>
        <taxon>Viruses</taxon>
        <taxon>Monodnaviria</taxon>
        <taxon>Loebvirae</taxon>
        <taxon>Hofneiviricota</taxon>
        <taxon>Faserviricetes</taxon>
        <taxon>Tubulavirales</taxon>
        <taxon>Inoviridae</taxon>
        <taxon>Primolicivirus</taxon>
    </lineage>
</organism>
<protein>
    <recommendedName>
        <fullName>10.9 kDa protein</fullName>
    </recommendedName>
    <alternativeName>
        <fullName>ORF 96</fullName>
    </alternativeName>
</protein>